<accession>B1JIV4</accession>
<protein>
    <recommendedName>
        <fullName evidence="1">Small ribosomal subunit protein uS7</fullName>
    </recommendedName>
    <alternativeName>
        <fullName evidence="2">30S ribosomal protein S7</fullName>
    </alternativeName>
</protein>
<feature type="chain" id="PRO_1000126031" description="Small ribosomal subunit protein uS7">
    <location>
        <begin position="1"/>
        <end position="156"/>
    </location>
</feature>
<proteinExistence type="inferred from homology"/>
<sequence>MPRRRVIGQRKILPDPKFGSELLAKFVNILMVDGKKSTAEAIVYTALETLAQRSGKDFLEAFEVALDNVRPTVEVKSRRVGGSTYQVPVEVRPVRRNALAMRWIVDAARKRGDKSMALRLANELSDAAENKGSAVKKREDVHRMAEANKAFAHYRW</sequence>
<organism>
    <name type="scientific">Yersinia pseudotuberculosis serotype O:3 (strain YPIII)</name>
    <dbReference type="NCBI Taxonomy" id="502800"/>
    <lineage>
        <taxon>Bacteria</taxon>
        <taxon>Pseudomonadati</taxon>
        <taxon>Pseudomonadota</taxon>
        <taxon>Gammaproteobacteria</taxon>
        <taxon>Enterobacterales</taxon>
        <taxon>Yersiniaceae</taxon>
        <taxon>Yersinia</taxon>
    </lineage>
</organism>
<dbReference type="EMBL" id="CP000950">
    <property type="protein sequence ID" value="ACA66589.1"/>
    <property type="molecule type" value="Genomic_DNA"/>
</dbReference>
<dbReference type="RefSeq" id="WP_002212324.1">
    <property type="nucleotide sequence ID" value="NZ_CP009792.1"/>
</dbReference>
<dbReference type="SMR" id="B1JIV4"/>
<dbReference type="GeneID" id="97454225"/>
<dbReference type="KEGG" id="ypy:YPK_0276"/>
<dbReference type="PATRIC" id="fig|502800.11.peg.882"/>
<dbReference type="GO" id="GO:0015935">
    <property type="term" value="C:small ribosomal subunit"/>
    <property type="evidence" value="ECO:0007669"/>
    <property type="project" value="InterPro"/>
</dbReference>
<dbReference type="GO" id="GO:0019843">
    <property type="term" value="F:rRNA binding"/>
    <property type="evidence" value="ECO:0007669"/>
    <property type="project" value="UniProtKB-UniRule"/>
</dbReference>
<dbReference type="GO" id="GO:0003735">
    <property type="term" value="F:structural constituent of ribosome"/>
    <property type="evidence" value="ECO:0007669"/>
    <property type="project" value="InterPro"/>
</dbReference>
<dbReference type="GO" id="GO:0000049">
    <property type="term" value="F:tRNA binding"/>
    <property type="evidence" value="ECO:0007669"/>
    <property type="project" value="UniProtKB-UniRule"/>
</dbReference>
<dbReference type="GO" id="GO:0006412">
    <property type="term" value="P:translation"/>
    <property type="evidence" value="ECO:0007669"/>
    <property type="project" value="UniProtKB-UniRule"/>
</dbReference>
<dbReference type="CDD" id="cd14869">
    <property type="entry name" value="uS7_Bacteria"/>
    <property type="match status" value="1"/>
</dbReference>
<dbReference type="FunFam" id="1.10.455.10:FF:000001">
    <property type="entry name" value="30S ribosomal protein S7"/>
    <property type="match status" value="1"/>
</dbReference>
<dbReference type="Gene3D" id="1.10.455.10">
    <property type="entry name" value="Ribosomal protein S7 domain"/>
    <property type="match status" value="1"/>
</dbReference>
<dbReference type="HAMAP" id="MF_00480_B">
    <property type="entry name" value="Ribosomal_uS7_B"/>
    <property type="match status" value="1"/>
</dbReference>
<dbReference type="InterPro" id="IPR000235">
    <property type="entry name" value="Ribosomal_uS7"/>
</dbReference>
<dbReference type="InterPro" id="IPR005717">
    <property type="entry name" value="Ribosomal_uS7_bac/org-type"/>
</dbReference>
<dbReference type="InterPro" id="IPR020606">
    <property type="entry name" value="Ribosomal_uS7_CS"/>
</dbReference>
<dbReference type="InterPro" id="IPR023798">
    <property type="entry name" value="Ribosomal_uS7_dom"/>
</dbReference>
<dbReference type="InterPro" id="IPR036823">
    <property type="entry name" value="Ribosomal_uS7_dom_sf"/>
</dbReference>
<dbReference type="NCBIfam" id="TIGR01029">
    <property type="entry name" value="rpsG_bact"/>
    <property type="match status" value="1"/>
</dbReference>
<dbReference type="PANTHER" id="PTHR11205">
    <property type="entry name" value="RIBOSOMAL PROTEIN S7"/>
    <property type="match status" value="1"/>
</dbReference>
<dbReference type="Pfam" id="PF00177">
    <property type="entry name" value="Ribosomal_S7"/>
    <property type="match status" value="1"/>
</dbReference>
<dbReference type="PIRSF" id="PIRSF002122">
    <property type="entry name" value="RPS7p_RPS7a_RPS5e_RPS7o"/>
    <property type="match status" value="1"/>
</dbReference>
<dbReference type="SUPFAM" id="SSF47973">
    <property type="entry name" value="Ribosomal protein S7"/>
    <property type="match status" value="1"/>
</dbReference>
<dbReference type="PROSITE" id="PS00052">
    <property type="entry name" value="RIBOSOMAL_S7"/>
    <property type="match status" value="1"/>
</dbReference>
<evidence type="ECO:0000255" key="1">
    <source>
        <dbReference type="HAMAP-Rule" id="MF_00480"/>
    </source>
</evidence>
<evidence type="ECO:0000305" key="2"/>
<name>RS7_YERPY</name>
<keyword id="KW-0687">Ribonucleoprotein</keyword>
<keyword id="KW-0689">Ribosomal protein</keyword>
<keyword id="KW-0694">RNA-binding</keyword>
<keyword id="KW-0699">rRNA-binding</keyword>
<keyword id="KW-0820">tRNA-binding</keyword>
<gene>
    <name evidence="1" type="primary">rpsG</name>
    <name type="ordered locus">YPK_0276</name>
</gene>
<comment type="function">
    <text evidence="1">One of the primary rRNA binding proteins, it binds directly to 16S rRNA where it nucleates assembly of the head domain of the 30S subunit. Is located at the subunit interface close to the decoding center, probably blocks exit of the E-site tRNA.</text>
</comment>
<comment type="subunit">
    <text evidence="1">Part of the 30S ribosomal subunit. Contacts proteins S9 and S11.</text>
</comment>
<comment type="similarity">
    <text evidence="1">Belongs to the universal ribosomal protein uS7 family.</text>
</comment>
<reference key="1">
    <citation type="submission" date="2008-02" db="EMBL/GenBank/DDBJ databases">
        <title>Complete sequence of Yersinia pseudotuberculosis YPIII.</title>
        <authorList>
            <consortium name="US DOE Joint Genome Institute"/>
            <person name="Copeland A."/>
            <person name="Lucas S."/>
            <person name="Lapidus A."/>
            <person name="Glavina del Rio T."/>
            <person name="Dalin E."/>
            <person name="Tice H."/>
            <person name="Bruce D."/>
            <person name="Goodwin L."/>
            <person name="Pitluck S."/>
            <person name="Munk A.C."/>
            <person name="Brettin T."/>
            <person name="Detter J.C."/>
            <person name="Han C."/>
            <person name="Tapia R."/>
            <person name="Schmutz J."/>
            <person name="Larimer F."/>
            <person name="Land M."/>
            <person name="Hauser L."/>
            <person name="Challacombe J.F."/>
            <person name="Green L."/>
            <person name="Lindler L.E."/>
            <person name="Nikolich M.P."/>
            <person name="Richardson P."/>
        </authorList>
    </citation>
    <scope>NUCLEOTIDE SEQUENCE [LARGE SCALE GENOMIC DNA]</scope>
    <source>
        <strain>YPIII</strain>
    </source>
</reference>